<evidence type="ECO:0000250" key="1"/>
<evidence type="ECO:0000255" key="2"/>
<evidence type="ECO:0000305" key="3"/>
<evidence type="ECO:0007829" key="4">
    <source>
        <dbReference type="PDB" id="2X9M"/>
    </source>
</evidence>
<evidence type="ECO:0007829" key="5">
    <source>
        <dbReference type="PDB" id="6PD4"/>
    </source>
</evidence>
<evidence type="ECO:0007829" key="6">
    <source>
        <dbReference type="PDB" id="6PDL"/>
    </source>
</evidence>
<evidence type="ECO:0007829" key="7">
    <source>
        <dbReference type="PDB" id="6VY4"/>
    </source>
</evidence>
<evidence type="ECO:0007829" key="8">
    <source>
        <dbReference type="PDB" id="8JR3"/>
    </source>
</evidence>
<organismHost>
    <name type="scientific">Equus caballus</name>
    <name type="common">Horse</name>
    <dbReference type="NCBI Taxonomy" id="9796"/>
</organismHost>
<organismHost>
    <name type="scientific">Homo sapiens</name>
    <name type="common">Human</name>
    <dbReference type="NCBI Taxonomy" id="9606"/>
</organismHost>
<organismHost>
    <name type="scientific">Pteropus alecto</name>
    <name type="common">Black flying fox</name>
    <dbReference type="NCBI Taxonomy" id="9402"/>
</organismHost>
<organismHost>
    <name type="scientific">Pteropus poliocephalus</name>
    <name type="common">Grey-headed flying fox</name>
    <dbReference type="NCBI Taxonomy" id="9403"/>
</organismHost>
<organismHost>
    <name type="scientific">Pteropus scapulatus</name>
    <name type="common">Little red flying fox</name>
    <dbReference type="NCBI Taxonomy" id="94117"/>
</organismHost>
<reference key="1">
    <citation type="journal article" date="1998" name="Virology">
        <title>The attachment protein of Hendra virus has high structural similarity but limited primary sequence homology compared with viruses in the genus Paramyxovirus.</title>
        <authorList>
            <person name="Yu M."/>
            <person name="Hansson E."/>
            <person name="Langedijk J.P."/>
            <person name="Eaton B.T."/>
            <person name="Wang L.F."/>
        </authorList>
    </citation>
    <scope>NUCLEOTIDE SEQUENCE [GENOMIC RNA]</scope>
</reference>
<name>GLYCP_HENDH</name>
<proteinExistence type="evidence at protein level"/>
<gene>
    <name type="primary">G</name>
</gene>
<dbReference type="EMBL" id="AF017149">
    <property type="protein sequence ID" value="AAC83193.2"/>
    <property type="molecule type" value="Genomic_RNA"/>
</dbReference>
<dbReference type="PIR" id="T08211">
    <property type="entry name" value="T08211"/>
</dbReference>
<dbReference type="PDB" id="2VSK">
    <property type="method" value="X-ray"/>
    <property type="resolution" value="3.30 A"/>
    <property type="chains" value="A/C=188-603"/>
</dbReference>
<dbReference type="PDB" id="2X9M">
    <property type="method" value="X-ray"/>
    <property type="resolution" value="2.90 A"/>
    <property type="chains" value="A/B/C/D=185-604"/>
</dbReference>
<dbReference type="PDB" id="6CMG">
    <property type="method" value="X-ray"/>
    <property type="resolution" value="2.70 A"/>
    <property type="chains" value="A=176-603"/>
</dbReference>
<dbReference type="PDB" id="6CMI">
    <property type="method" value="X-ray"/>
    <property type="resolution" value="2.72 A"/>
    <property type="chains" value="B=176-603"/>
</dbReference>
<dbReference type="PDB" id="6PD4">
    <property type="method" value="X-ray"/>
    <property type="resolution" value="2.20 A"/>
    <property type="chains" value="A/B=171-604"/>
</dbReference>
<dbReference type="PDB" id="6PDL">
    <property type="method" value="X-ray"/>
    <property type="resolution" value="2.70 A"/>
    <property type="chains" value="A/C/E/G=171-604"/>
</dbReference>
<dbReference type="PDB" id="6VY4">
    <property type="method" value="X-ray"/>
    <property type="resolution" value="2.00 A"/>
    <property type="chains" value="A/B=185-604"/>
</dbReference>
<dbReference type="PDB" id="6VY6">
    <property type="method" value="X-ray"/>
    <property type="resolution" value="2.60 A"/>
    <property type="chains" value="A=185-604"/>
</dbReference>
<dbReference type="PDB" id="7SYY">
    <property type="method" value="X-ray"/>
    <property type="resolution" value="2.74 A"/>
    <property type="chains" value="A=1-604"/>
</dbReference>
<dbReference type="PDB" id="7SYZ">
    <property type="method" value="X-ray"/>
    <property type="resolution" value="2.86 A"/>
    <property type="chains" value="A=1-604"/>
</dbReference>
<dbReference type="PDB" id="8JR3">
    <property type="method" value="X-ray"/>
    <property type="resolution" value="3.22 A"/>
    <property type="chains" value="E/F=188-603"/>
</dbReference>
<dbReference type="PDB" id="8JR5">
    <property type="method" value="X-ray"/>
    <property type="resolution" value="3.30 A"/>
    <property type="chains" value="A/B=188-603"/>
</dbReference>
<dbReference type="PDBsum" id="2VSK"/>
<dbReference type="PDBsum" id="2X9M"/>
<dbReference type="PDBsum" id="6CMG"/>
<dbReference type="PDBsum" id="6CMI"/>
<dbReference type="PDBsum" id="6PD4"/>
<dbReference type="PDBsum" id="6PDL"/>
<dbReference type="PDBsum" id="6VY4"/>
<dbReference type="PDBsum" id="6VY6"/>
<dbReference type="PDBsum" id="7SYY"/>
<dbReference type="PDBsum" id="7SYZ"/>
<dbReference type="PDBsum" id="8JR3"/>
<dbReference type="PDBsum" id="8JR5"/>
<dbReference type="SMR" id="O89343"/>
<dbReference type="DIP" id="DIP-46379N"/>
<dbReference type="IntAct" id="O89343">
    <property type="interactions" value="1"/>
</dbReference>
<dbReference type="CAZy" id="GH83">
    <property type="family name" value="Glycoside Hydrolase Family 83"/>
</dbReference>
<dbReference type="GlyCosmos" id="O89343">
    <property type="glycosylation" value="7 sites, No reported glycans"/>
</dbReference>
<dbReference type="ABCD" id="O89343">
    <property type="antibodies" value="11 sequenced antibodies"/>
</dbReference>
<dbReference type="KEGG" id="vg:1446471"/>
<dbReference type="EvolutionaryTrace" id="O89343"/>
<dbReference type="Proteomes" id="UP000008771">
    <property type="component" value="Segment"/>
</dbReference>
<dbReference type="GO" id="GO:0020002">
    <property type="term" value="C:host cell plasma membrane"/>
    <property type="evidence" value="ECO:0007669"/>
    <property type="project" value="UniProtKB-SubCell"/>
</dbReference>
<dbReference type="GO" id="GO:0044228">
    <property type="term" value="C:host cell surface"/>
    <property type="evidence" value="ECO:0000314"/>
    <property type="project" value="CACAO"/>
</dbReference>
<dbReference type="GO" id="GO:0016020">
    <property type="term" value="C:membrane"/>
    <property type="evidence" value="ECO:0007669"/>
    <property type="project" value="UniProtKB-KW"/>
</dbReference>
<dbReference type="GO" id="GO:0019031">
    <property type="term" value="C:viral envelope"/>
    <property type="evidence" value="ECO:0007669"/>
    <property type="project" value="UniProtKB-KW"/>
</dbReference>
<dbReference type="GO" id="GO:0055036">
    <property type="term" value="C:virion membrane"/>
    <property type="evidence" value="ECO:0007669"/>
    <property type="project" value="UniProtKB-SubCell"/>
</dbReference>
<dbReference type="GO" id="GO:0004308">
    <property type="term" value="F:exo-alpha-sialidase activity"/>
    <property type="evidence" value="ECO:0007669"/>
    <property type="project" value="InterPro"/>
</dbReference>
<dbReference type="GO" id="GO:0046789">
    <property type="term" value="F:host cell surface receptor binding"/>
    <property type="evidence" value="ECO:0007669"/>
    <property type="project" value="InterPro"/>
</dbReference>
<dbReference type="GO" id="GO:0046718">
    <property type="term" value="P:symbiont entry into host cell"/>
    <property type="evidence" value="ECO:0007669"/>
    <property type="project" value="UniProtKB-KW"/>
</dbReference>
<dbReference type="GO" id="GO:0019062">
    <property type="term" value="P:virion attachment to host cell"/>
    <property type="evidence" value="ECO:0007669"/>
    <property type="project" value="UniProtKB-KW"/>
</dbReference>
<dbReference type="CDD" id="cd15468">
    <property type="entry name" value="HeV-G"/>
    <property type="match status" value="1"/>
</dbReference>
<dbReference type="Gene3D" id="2.120.10.10">
    <property type="match status" value="1"/>
</dbReference>
<dbReference type="InterPro" id="IPR016285">
    <property type="entry name" value="Hemagglutn-neuramid"/>
</dbReference>
<dbReference type="InterPro" id="IPR000665">
    <property type="entry name" value="Hemagglutn/HN"/>
</dbReference>
<dbReference type="InterPro" id="IPR036278">
    <property type="entry name" value="Sialidase_sf"/>
</dbReference>
<dbReference type="Pfam" id="PF00423">
    <property type="entry name" value="HN"/>
    <property type="match status" value="1"/>
</dbReference>
<dbReference type="PIRSF" id="PIRSF001072">
    <property type="entry name" value="Hemagglut-neuramid_paramyxoV"/>
    <property type="match status" value="1"/>
</dbReference>
<dbReference type="SUPFAM" id="SSF50939">
    <property type="entry name" value="Sialidases"/>
    <property type="match status" value="1"/>
</dbReference>
<accession>O89343</accession>
<protein>
    <recommendedName>
        <fullName>Glycoprotein G</fullName>
    </recommendedName>
</protein>
<comment type="function">
    <text evidence="1">Attaches the virus to sialic acid-containing cell receptors and thereby initiating infection. Binding of glycoprotein G to the receptor induces a conformational change that allows the F protein to trigger virion/cell membranes fusion (By similarity).</text>
</comment>
<comment type="interaction">
    <interactant intactId="EBI-15702753">
        <id>O89343</id>
    </interactant>
    <interactant intactId="EBI-7532268">
        <id>P52799</id>
        <label>EFNB2</label>
    </interactant>
    <organismsDiffer>true</organismsDiffer>
    <experiments>2</experiments>
</comment>
<comment type="subcellular location">
    <subcellularLocation>
        <location evidence="3">Virion membrane</location>
        <topology evidence="3">Single-pass type II membrane protein</topology>
    </subcellularLocation>
    <subcellularLocation>
        <location evidence="3">Host cell membrane</location>
        <topology evidence="3">Single-pass type II membrane protein</topology>
    </subcellularLocation>
</comment>
<comment type="similarity">
    <text evidence="3">Belongs to the paramyxoviruses hemagglutinin-neuraminidase family.</text>
</comment>
<comment type="caution">
    <text evidence="3">Henipavirus glycoproteins have no neuraminidase activity.</text>
</comment>
<keyword id="KW-0002">3D-structure</keyword>
<keyword id="KW-0325">Glycoprotein</keyword>
<keyword id="KW-0348">Hemagglutinin</keyword>
<keyword id="KW-1032">Host cell membrane</keyword>
<keyword id="KW-1043">Host membrane</keyword>
<keyword id="KW-0945">Host-virus interaction</keyword>
<keyword id="KW-0472">Membrane</keyword>
<keyword id="KW-1185">Reference proteome</keyword>
<keyword id="KW-0735">Signal-anchor</keyword>
<keyword id="KW-0812">Transmembrane</keyword>
<keyword id="KW-1133">Transmembrane helix</keyword>
<keyword id="KW-1161">Viral attachment to host cell</keyword>
<keyword id="KW-0261">Viral envelope protein</keyword>
<keyword id="KW-0946">Virion</keyword>
<keyword id="KW-1160">Virus entry into host cell</keyword>
<sequence length="604" mass="67191">MMADSKLVSLNNNLSGKIKDQGKVIKNYYGTMDIKKINDGLLDSKILGAFNTVIALLGSIIIIVMNIMIIQNYTRTTDNQALIKESLQSVQQQIKALTDKIGTEIGPKVSLIDTSSTITIPANIGLLGSKISQSTSSINENVNDKCKFTLPPLKIHECNISCPNPLPFREYRPISQGVSDLVGLPNQICLQKTTSTILKPRLISYTLPINTREGVCITDPLLAVDNGFFAYSHLEKIGSCTRGIAKQRIIGVGEVLDRGDKVPSMFMTNVWTPPNPSTIHHCSSTYHEDFYYTLCAVSHVGDPILNSTSWTESLSLIRLAVRPKSDSGDYNQKYIAITKVERGKYDKVMPYGPSGIKQGDTLYFPAVGFLPRTEFQYNDSNCPIIHCKYSKAENCRLSMGVNSKSHYILRSGLLKYNLSLGGDIILQFIEIADNRLTIGSPSKIYNSLGQPVFYQASYSWDTMIKLGDVDTVDPLRVQWRNNSVISRPGQSQCPRFNVCPEVCWEGTYNDAFLIDRLNWVSAGVYLNSNQTAENPVFAVFKDNEILYQVPLAEDDTNAQKTITDCFLLENVIWCISLVEIYDTGDSVIRPKLFAVKIPAQCSES</sequence>
<feature type="chain" id="PRO_0000236008" description="Glycoprotein G">
    <location>
        <begin position="1"/>
        <end position="604"/>
    </location>
</feature>
<feature type="topological domain" description="Intravirion" evidence="2">
    <location>
        <begin position="1"/>
        <end position="49"/>
    </location>
</feature>
<feature type="transmembrane region" description="Helical" evidence="2">
    <location>
        <begin position="50"/>
        <end position="70"/>
    </location>
</feature>
<feature type="topological domain" description="Virion surface" evidence="2">
    <location>
        <begin position="71"/>
        <end position="604"/>
    </location>
</feature>
<feature type="glycosylation site" description="N-linked (GlcNAc...) asparagine; by host" evidence="2">
    <location>
        <position position="72"/>
    </location>
</feature>
<feature type="glycosylation site" description="N-linked (GlcNAc...) asparagine; by host" evidence="2">
    <location>
        <position position="159"/>
    </location>
</feature>
<feature type="glycosylation site" description="N-linked (GlcNAc...) asparagine; by host" evidence="2">
    <location>
        <position position="306"/>
    </location>
</feature>
<feature type="glycosylation site" description="N-linked (GlcNAc...) asparagine; by host" evidence="2">
    <location>
        <position position="378"/>
    </location>
</feature>
<feature type="glycosylation site" description="N-linked (GlcNAc...) asparagine; by host" evidence="2">
    <location>
        <position position="417"/>
    </location>
</feature>
<feature type="glycosylation site" description="N-linked (GlcNAc...) asparagine; by host" evidence="2">
    <location>
        <position position="481"/>
    </location>
</feature>
<feature type="glycosylation site" description="N-linked (GlcNAc...) asparagine; by host" evidence="2">
    <location>
        <position position="529"/>
    </location>
</feature>
<feature type="strand" evidence="5">
    <location>
        <begin position="178"/>
        <end position="181"/>
    </location>
</feature>
<feature type="helix" evidence="7">
    <location>
        <begin position="195"/>
        <end position="197"/>
    </location>
</feature>
<feature type="strand" evidence="6">
    <location>
        <begin position="201"/>
        <end position="203"/>
    </location>
</feature>
<feature type="helix" evidence="7">
    <location>
        <begin position="204"/>
        <end position="206"/>
    </location>
</feature>
<feature type="turn" evidence="8">
    <location>
        <begin position="211"/>
        <end position="213"/>
    </location>
</feature>
<feature type="strand" evidence="7">
    <location>
        <begin position="215"/>
        <end position="225"/>
    </location>
</feature>
<feature type="strand" evidence="7">
    <location>
        <begin position="228"/>
        <end position="238"/>
    </location>
</feature>
<feature type="turn" evidence="7">
    <location>
        <begin position="240"/>
        <end position="242"/>
    </location>
</feature>
<feature type="strand" evidence="7">
    <location>
        <begin position="243"/>
        <end position="257"/>
    </location>
</feature>
<feature type="strand" evidence="7">
    <location>
        <begin position="259"/>
        <end position="271"/>
    </location>
</feature>
<feature type="helix" evidence="7">
    <location>
        <begin position="276"/>
        <end position="278"/>
    </location>
</feature>
<feature type="strand" evidence="7">
    <location>
        <begin position="279"/>
        <end position="287"/>
    </location>
</feature>
<feature type="strand" evidence="7">
    <location>
        <begin position="290"/>
        <end position="297"/>
    </location>
</feature>
<feature type="strand" evidence="7">
    <location>
        <begin position="299"/>
        <end position="301"/>
    </location>
</feature>
<feature type="helix" evidence="7">
    <location>
        <begin position="303"/>
        <end position="305"/>
    </location>
</feature>
<feature type="turn" evidence="7">
    <location>
        <begin position="307"/>
        <end position="309"/>
    </location>
</feature>
<feature type="strand" evidence="7">
    <location>
        <begin position="314"/>
        <end position="322"/>
    </location>
</feature>
<feature type="strand" evidence="7">
    <location>
        <begin position="330"/>
        <end position="337"/>
    </location>
</feature>
<feature type="strand" evidence="7">
    <location>
        <begin position="339"/>
        <end position="341"/>
    </location>
</feature>
<feature type="strand" evidence="7">
    <location>
        <begin position="346"/>
        <end position="350"/>
    </location>
</feature>
<feature type="strand" evidence="7">
    <location>
        <begin position="352"/>
        <end position="354"/>
    </location>
</feature>
<feature type="strand" evidence="7">
    <location>
        <begin position="356"/>
        <end position="358"/>
    </location>
</feature>
<feature type="strand" evidence="7">
    <location>
        <begin position="361"/>
        <end position="371"/>
    </location>
</feature>
<feature type="helix" evidence="7">
    <location>
        <begin position="372"/>
        <end position="374"/>
    </location>
</feature>
<feature type="helix" evidence="7">
    <location>
        <begin position="379"/>
        <end position="381"/>
    </location>
</feature>
<feature type="helix" evidence="7">
    <location>
        <begin position="394"/>
        <end position="397"/>
    </location>
</feature>
<feature type="strand" evidence="7">
    <location>
        <begin position="400"/>
        <end position="402"/>
    </location>
</feature>
<feature type="strand" evidence="7">
    <location>
        <begin position="406"/>
        <end position="417"/>
    </location>
</feature>
<feature type="helix" evidence="7">
    <location>
        <begin position="418"/>
        <end position="420"/>
    </location>
</feature>
<feature type="strand" evidence="7">
    <location>
        <begin position="425"/>
        <end position="431"/>
    </location>
</feature>
<feature type="strand" evidence="7">
    <location>
        <begin position="442"/>
        <end position="447"/>
    </location>
</feature>
<feature type="strand" evidence="7">
    <location>
        <begin position="450"/>
        <end position="455"/>
    </location>
</feature>
<feature type="strand" evidence="7">
    <location>
        <begin position="465"/>
        <end position="471"/>
    </location>
</feature>
<feature type="turn" evidence="7">
    <location>
        <begin position="472"/>
        <end position="474"/>
    </location>
</feature>
<feature type="strand" evidence="7">
    <location>
        <begin position="475"/>
        <end position="479"/>
    </location>
</feature>
<feature type="strand" evidence="7">
    <location>
        <begin position="491"/>
        <end position="493"/>
    </location>
</feature>
<feature type="strand" evidence="7">
    <location>
        <begin position="511"/>
        <end position="515"/>
    </location>
</feature>
<feature type="turn" evidence="7">
    <location>
        <begin position="516"/>
        <end position="519"/>
    </location>
</feature>
<feature type="strand" evidence="7">
    <location>
        <begin position="520"/>
        <end position="526"/>
    </location>
</feature>
<feature type="strand" evidence="7">
    <location>
        <begin position="529"/>
        <end position="533"/>
    </location>
</feature>
<feature type="strand" evidence="7">
    <location>
        <begin position="535"/>
        <end position="541"/>
    </location>
</feature>
<feature type="strand" evidence="7">
    <location>
        <begin position="544"/>
        <end position="552"/>
    </location>
</feature>
<feature type="strand" evidence="7">
    <location>
        <begin position="557"/>
        <end position="568"/>
    </location>
</feature>
<feature type="strand" evidence="7">
    <location>
        <begin position="571"/>
        <end position="580"/>
    </location>
</feature>
<feature type="turn" evidence="7">
    <location>
        <begin position="583"/>
        <end position="585"/>
    </location>
</feature>
<feature type="strand" evidence="4">
    <location>
        <begin position="586"/>
        <end position="588"/>
    </location>
</feature>
<feature type="strand" evidence="7">
    <location>
        <begin position="589"/>
        <end position="596"/>
    </location>
</feature>
<feature type="strand" evidence="5">
    <location>
        <begin position="599"/>
        <end position="602"/>
    </location>
</feature>
<organism>
    <name type="scientific">Hendra virus (isolate Horse/Autralia/Hendra/1994)</name>
    <dbReference type="NCBI Taxonomy" id="928303"/>
    <lineage>
        <taxon>Viruses</taxon>
        <taxon>Riboviria</taxon>
        <taxon>Orthornavirae</taxon>
        <taxon>Negarnaviricota</taxon>
        <taxon>Haploviricotina</taxon>
        <taxon>Monjiviricetes</taxon>
        <taxon>Mononegavirales</taxon>
        <taxon>Paramyxoviridae</taxon>
        <taxon>Orthoparamyxovirinae</taxon>
        <taxon>Henipavirus</taxon>
        <taxon>Henipavirus hendraense</taxon>
    </lineage>
</organism>